<name>YBGS_SALTY</name>
<gene>
    <name type="primary">ybgS</name>
    <name type="ordered locus">STM0759</name>
</gene>
<reference key="1">
    <citation type="journal article" date="2001" name="Nature">
        <title>Complete genome sequence of Salmonella enterica serovar Typhimurium LT2.</title>
        <authorList>
            <person name="McClelland M."/>
            <person name="Sanderson K.E."/>
            <person name="Spieth J."/>
            <person name="Clifton S.W."/>
            <person name="Latreille P."/>
            <person name="Courtney L."/>
            <person name="Porwollik S."/>
            <person name="Ali J."/>
            <person name="Dante M."/>
            <person name="Du F."/>
            <person name="Hou S."/>
            <person name="Layman D."/>
            <person name="Leonard S."/>
            <person name="Nguyen C."/>
            <person name="Scott K."/>
            <person name="Holmes A."/>
            <person name="Grewal N."/>
            <person name="Mulvaney E."/>
            <person name="Ryan E."/>
            <person name="Sun H."/>
            <person name="Florea L."/>
            <person name="Miller W."/>
            <person name="Stoneking T."/>
            <person name="Nhan M."/>
            <person name="Waterston R."/>
            <person name="Wilson R.K."/>
        </authorList>
    </citation>
    <scope>NUCLEOTIDE SEQUENCE [LARGE SCALE GENOMIC DNA]</scope>
    <source>
        <strain>LT2 / SGSC1412 / ATCC 700720</strain>
    </source>
</reference>
<feature type="signal peptide" evidence="1">
    <location>
        <begin position="1"/>
        <end position="24"/>
    </location>
</feature>
<feature type="chain" id="PRO_0000013809" description="Uncharacterized protein YbgS">
    <location>
        <begin position="25"/>
        <end position="128"/>
    </location>
</feature>
<feature type="region of interest" description="Disordered" evidence="2">
    <location>
        <begin position="24"/>
        <end position="128"/>
    </location>
</feature>
<feature type="compositionally biased region" description="Low complexity" evidence="2">
    <location>
        <begin position="24"/>
        <end position="44"/>
    </location>
</feature>
<feature type="compositionally biased region" description="Low complexity" evidence="2">
    <location>
        <begin position="52"/>
        <end position="70"/>
    </location>
</feature>
<feature type="compositionally biased region" description="Polar residues" evidence="2">
    <location>
        <begin position="71"/>
        <end position="82"/>
    </location>
</feature>
<feature type="compositionally biased region" description="Basic and acidic residues" evidence="2">
    <location>
        <begin position="85"/>
        <end position="110"/>
    </location>
</feature>
<feature type="compositionally biased region" description="Polar residues" evidence="2">
    <location>
        <begin position="113"/>
        <end position="128"/>
    </location>
</feature>
<accession>P64437</accession>
<accession>Q8XG68</accession>
<organism>
    <name type="scientific">Salmonella typhimurium (strain LT2 / SGSC1412 / ATCC 700720)</name>
    <dbReference type="NCBI Taxonomy" id="99287"/>
    <lineage>
        <taxon>Bacteria</taxon>
        <taxon>Pseudomonadati</taxon>
        <taxon>Pseudomonadota</taxon>
        <taxon>Gammaproteobacteria</taxon>
        <taxon>Enterobacterales</taxon>
        <taxon>Enterobacteriaceae</taxon>
        <taxon>Salmonella</taxon>
    </lineage>
</organism>
<keyword id="KW-1185">Reference proteome</keyword>
<keyword id="KW-0732">Signal</keyword>
<proteinExistence type="inferred from homology"/>
<evidence type="ECO:0000255" key="1"/>
<evidence type="ECO:0000256" key="2">
    <source>
        <dbReference type="SAM" id="MobiDB-lite"/>
    </source>
</evidence>
<dbReference type="EMBL" id="AE006468">
    <property type="protein sequence ID" value="AAL19698.1"/>
    <property type="molecule type" value="Genomic_DNA"/>
</dbReference>
<dbReference type="RefSeq" id="NP_459739.1">
    <property type="nucleotide sequence ID" value="NC_003197.2"/>
</dbReference>
<dbReference type="RefSeq" id="WP_000784380.1">
    <property type="nucleotide sequence ID" value="NC_003197.2"/>
</dbReference>
<dbReference type="STRING" id="99287.STM0759"/>
<dbReference type="PaxDb" id="99287-STM0759"/>
<dbReference type="GeneID" id="1252279"/>
<dbReference type="KEGG" id="stm:STM0759"/>
<dbReference type="PATRIC" id="fig|99287.12.peg.790"/>
<dbReference type="HOGENOM" id="CLU_161896_0_0_6"/>
<dbReference type="OMA" id="MTKDEVH"/>
<dbReference type="PhylomeDB" id="P64437"/>
<dbReference type="BioCyc" id="SENT99287:STM0759-MONOMER"/>
<dbReference type="Proteomes" id="UP000001014">
    <property type="component" value="Chromosome"/>
</dbReference>
<dbReference type="InterPro" id="IPR020363">
    <property type="entry name" value="Uncharacterised_YbgS"/>
</dbReference>
<dbReference type="Pfam" id="PF13985">
    <property type="entry name" value="YbgS"/>
    <property type="match status" value="1"/>
</dbReference>
<sequence>MKMTKLTTLLLTATLGLASGAALAAESNAQSSNGQANSAANAGQVAPDARQNVAPNDVNNNDINTNGNTNSTMQHPDGSTMNHDGMTKDEEHKNTMCKDGRCPDINKKVETGNGVNNDVNTKTDGTTQ</sequence>
<protein>
    <recommendedName>
        <fullName>Uncharacterized protein YbgS</fullName>
    </recommendedName>
</protein>